<keyword id="KW-0067">ATP-binding</keyword>
<keyword id="KW-0460">Magnesium</keyword>
<keyword id="KW-0547">Nucleotide-binding</keyword>
<keyword id="KW-1185">Reference proteome</keyword>
<keyword id="KW-0808">Transferase</keyword>
<keyword id="KW-0819">tRNA processing</keyword>
<reference key="1">
    <citation type="submission" date="2004-12" db="EMBL/GenBank/DDBJ databases">
        <title>The genome sequence of Borrelia hermsii and Borrelia turicatae: comparative analysis of two agents of endemic N. America relapsing fever.</title>
        <authorList>
            <person name="Porcella S.F."/>
            <person name="Raffel S.J."/>
            <person name="Schrumpf M.E."/>
            <person name="Montgomery B."/>
            <person name="Smith T."/>
            <person name="Schwan T.G."/>
        </authorList>
    </citation>
    <scope>NUCLEOTIDE SEQUENCE [LARGE SCALE GENOMIC DNA]</scope>
    <source>
        <strain>91E135</strain>
    </source>
</reference>
<feature type="chain" id="PRO_0000377090" description="tRNA dimethylallyltransferase">
    <location>
        <begin position="1"/>
        <end position="300"/>
    </location>
</feature>
<feature type="region of interest" description="Interaction with substrate tRNA" evidence="1">
    <location>
        <begin position="35"/>
        <end position="38"/>
    </location>
</feature>
<feature type="binding site" evidence="1">
    <location>
        <begin position="11"/>
        <end position="18"/>
    </location>
    <ligand>
        <name>ATP</name>
        <dbReference type="ChEBI" id="CHEBI:30616"/>
    </ligand>
</feature>
<feature type="binding site" evidence="1">
    <location>
        <begin position="13"/>
        <end position="18"/>
    </location>
    <ligand>
        <name>substrate</name>
    </ligand>
</feature>
<feature type="site" description="Interaction with substrate tRNA" evidence="1">
    <location>
        <position position="101"/>
    </location>
</feature>
<feature type="site" description="Interaction with substrate tRNA" evidence="1">
    <location>
        <position position="123"/>
    </location>
</feature>
<proteinExistence type="inferred from homology"/>
<dbReference type="EC" id="2.5.1.75" evidence="1"/>
<dbReference type="EMBL" id="CP000049">
    <property type="protein sequence ID" value="AAX18137.1"/>
    <property type="molecule type" value="Genomic_DNA"/>
</dbReference>
<dbReference type="RefSeq" id="WP_011772755.1">
    <property type="nucleotide sequence ID" value="NC_008710.1"/>
</dbReference>
<dbReference type="SMR" id="A1R0P6"/>
<dbReference type="KEGG" id="btu:BT0821"/>
<dbReference type="eggNOG" id="COG0324">
    <property type="taxonomic scope" value="Bacteria"/>
</dbReference>
<dbReference type="HOGENOM" id="CLU_032616_0_2_12"/>
<dbReference type="Proteomes" id="UP000001205">
    <property type="component" value="Chromosome"/>
</dbReference>
<dbReference type="GO" id="GO:0005524">
    <property type="term" value="F:ATP binding"/>
    <property type="evidence" value="ECO:0007669"/>
    <property type="project" value="UniProtKB-UniRule"/>
</dbReference>
<dbReference type="GO" id="GO:0052381">
    <property type="term" value="F:tRNA dimethylallyltransferase activity"/>
    <property type="evidence" value="ECO:0007669"/>
    <property type="project" value="UniProtKB-UniRule"/>
</dbReference>
<dbReference type="GO" id="GO:0006400">
    <property type="term" value="P:tRNA modification"/>
    <property type="evidence" value="ECO:0007669"/>
    <property type="project" value="TreeGrafter"/>
</dbReference>
<dbReference type="Gene3D" id="1.10.20.140">
    <property type="match status" value="1"/>
</dbReference>
<dbReference type="Gene3D" id="3.40.50.300">
    <property type="entry name" value="P-loop containing nucleotide triphosphate hydrolases"/>
    <property type="match status" value="1"/>
</dbReference>
<dbReference type="HAMAP" id="MF_00185">
    <property type="entry name" value="IPP_trans"/>
    <property type="match status" value="1"/>
</dbReference>
<dbReference type="InterPro" id="IPR039657">
    <property type="entry name" value="Dimethylallyltransferase"/>
</dbReference>
<dbReference type="InterPro" id="IPR018022">
    <property type="entry name" value="IPT"/>
</dbReference>
<dbReference type="InterPro" id="IPR027417">
    <property type="entry name" value="P-loop_NTPase"/>
</dbReference>
<dbReference type="NCBIfam" id="TIGR00174">
    <property type="entry name" value="miaA"/>
    <property type="match status" value="1"/>
</dbReference>
<dbReference type="PANTHER" id="PTHR11088">
    <property type="entry name" value="TRNA DIMETHYLALLYLTRANSFERASE"/>
    <property type="match status" value="1"/>
</dbReference>
<dbReference type="PANTHER" id="PTHR11088:SF60">
    <property type="entry name" value="TRNA DIMETHYLALLYLTRANSFERASE"/>
    <property type="match status" value="1"/>
</dbReference>
<dbReference type="Pfam" id="PF01715">
    <property type="entry name" value="IPPT"/>
    <property type="match status" value="1"/>
</dbReference>
<dbReference type="SUPFAM" id="SSF52540">
    <property type="entry name" value="P-loop containing nucleoside triphosphate hydrolases"/>
    <property type="match status" value="1"/>
</dbReference>
<accession>A1R0P6</accession>
<evidence type="ECO:0000255" key="1">
    <source>
        <dbReference type="HAMAP-Rule" id="MF_00185"/>
    </source>
</evidence>
<organism>
    <name type="scientific">Borrelia turicatae (strain 91E135)</name>
    <dbReference type="NCBI Taxonomy" id="314724"/>
    <lineage>
        <taxon>Bacteria</taxon>
        <taxon>Pseudomonadati</taxon>
        <taxon>Spirochaetota</taxon>
        <taxon>Spirochaetia</taxon>
        <taxon>Spirochaetales</taxon>
        <taxon>Borreliaceae</taxon>
        <taxon>Borrelia</taxon>
    </lineage>
</organism>
<name>MIAA_BORT9</name>
<comment type="function">
    <text evidence="1">Catalyzes the transfer of a dimethylallyl group onto the adenine at position 37 in tRNAs that read codons beginning with uridine, leading to the formation of N6-(dimethylallyl)adenosine (i(6)A).</text>
</comment>
<comment type="catalytic activity">
    <reaction evidence="1">
        <text>adenosine(37) in tRNA + dimethylallyl diphosphate = N(6)-dimethylallyladenosine(37) in tRNA + diphosphate</text>
        <dbReference type="Rhea" id="RHEA:26482"/>
        <dbReference type="Rhea" id="RHEA-COMP:10162"/>
        <dbReference type="Rhea" id="RHEA-COMP:10375"/>
        <dbReference type="ChEBI" id="CHEBI:33019"/>
        <dbReference type="ChEBI" id="CHEBI:57623"/>
        <dbReference type="ChEBI" id="CHEBI:74411"/>
        <dbReference type="ChEBI" id="CHEBI:74415"/>
        <dbReference type="EC" id="2.5.1.75"/>
    </reaction>
</comment>
<comment type="cofactor">
    <cofactor evidence="1">
        <name>Mg(2+)</name>
        <dbReference type="ChEBI" id="CHEBI:18420"/>
    </cofactor>
</comment>
<comment type="subunit">
    <text evidence="1">Monomer.</text>
</comment>
<comment type="similarity">
    <text evidence="1">Belongs to the IPP transferase family.</text>
</comment>
<sequence length="300" mass="35001">MKKNKIVFIFGPTAVGKSDILFNFPKGIAEVINVDSIQVYKEFDIASCKPSVELRSHIKHHLVDFLEPIEEYNLGVFYKEASKIIKNLRDQDKLPVFVGGSAFYFKHLQYGLPSTPPVSSEIRFYVNSLFTTRGKDYLLEELKRVDFERYESISENDIYRIRRSLEVYYQTGIPISQFLKKGQMIEDVLAIGLKRPMEEMRSRIISRVGNMIDCGLLEEIKSLLGKGYDETTPAFKGIGYREFLLWKSRPYSMLNDIIDLIVKNSFLYVKRQMTFFDKIPNVLWFHPDDDLRDILDLIFV</sequence>
<protein>
    <recommendedName>
        <fullName evidence="1">tRNA dimethylallyltransferase</fullName>
        <ecNumber evidence="1">2.5.1.75</ecNumber>
    </recommendedName>
    <alternativeName>
        <fullName evidence="1">Dimethylallyl diphosphate:tRNA dimethylallyltransferase</fullName>
        <shortName evidence="1">DMAPP:tRNA dimethylallyltransferase</shortName>
        <shortName evidence="1">DMATase</shortName>
    </alternativeName>
    <alternativeName>
        <fullName evidence="1">Isopentenyl-diphosphate:tRNA isopentenyltransferase</fullName>
        <shortName evidence="1">IPP transferase</shortName>
        <shortName evidence="1">IPPT</shortName>
        <shortName evidence="1">IPTase</shortName>
    </alternativeName>
</protein>
<gene>
    <name evidence="1" type="primary">miaA</name>
    <name type="ordered locus">BT0821</name>
</gene>